<proteinExistence type="inferred from homology"/>
<reference key="1">
    <citation type="submission" date="2006-06" db="EMBL/GenBank/DDBJ databases">
        <title>Complete sequence of chromosome of Mycobacterium sp. MCS.</title>
        <authorList>
            <consortium name="US DOE Joint Genome Institute"/>
            <person name="Copeland A."/>
            <person name="Lucas S."/>
            <person name="Lapidus A."/>
            <person name="Barry K."/>
            <person name="Detter J.C."/>
            <person name="Glavina del Rio T."/>
            <person name="Hammon N."/>
            <person name="Israni S."/>
            <person name="Dalin E."/>
            <person name="Tice H."/>
            <person name="Pitluck S."/>
            <person name="Martinez M."/>
            <person name="Schmutz J."/>
            <person name="Larimer F."/>
            <person name="Land M."/>
            <person name="Hauser L."/>
            <person name="Kyrpides N."/>
            <person name="Kim E."/>
            <person name="Miller C.D."/>
            <person name="Hughes J.E."/>
            <person name="Anderson A.J."/>
            <person name="Sims R.C."/>
            <person name="Richardson P."/>
        </authorList>
    </citation>
    <scope>NUCLEOTIDE SEQUENCE [LARGE SCALE GENOMIC DNA]</scope>
    <source>
        <strain>MCS</strain>
    </source>
</reference>
<keyword id="KW-0687">Ribonucleoprotein</keyword>
<keyword id="KW-0689">Ribosomal protein</keyword>
<keyword id="KW-0694">RNA-binding</keyword>
<keyword id="KW-0699">rRNA-binding</keyword>
<protein>
    <recommendedName>
        <fullName evidence="1">Large ribosomal subunit protein uL10</fullName>
    </recommendedName>
    <alternativeName>
        <fullName evidence="2">50S ribosomal protein L10</fullName>
    </alternativeName>
</protein>
<accession>Q1BDF3</accession>
<organism>
    <name type="scientific">Mycobacterium sp. (strain MCS)</name>
    <dbReference type="NCBI Taxonomy" id="164756"/>
    <lineage>
        <taxon>Bacteria</taxon>
        <taxon>Bacillati</taxon>
        <taxon>Actinomycetota</taxon>
        <taxon>Actinomycetes</taxon>
        <taxon>Mycobacteriales</taxon>
        <taxon>Mycobacteriaceae</taxon>
        <taxon>Mycobacterium</taxon>
    </lineage>
</organism>
<name>RL10_MYCSS</name>
<feature type="chain" id="PRO_1000005539" description="Large ribosomal subunit protein uL10">
    <location>
        <begin position="1"/>
        <end position="175"/>
    </location>
</feature>
<sequence length="175" mass="18199">MAKADKATAVADIAEQFKEATATVVTEYRGLTVANLAQLRRSLGESATYTVAKNTLVKRAAAEAGIDGLDELFTGPTAIAFVQGEPVDAAKAIKAFAKEHKALVIKGGYMEGRALSIDEVNRIADLESREVLLAKLAGAMKGNLAKAAGLFNAPASQVARLAAALQEKKAGEEAA</sequence>
<comment type="function">
    <text evidence="1">Forms part of the ribosomal stalk, playing a central role in the interaction of the ribosome with GTP-bound translation factors.</text>
</comment>
<comment type="subunit">
    <text evidence="1">Part of the ribosomal stalk of the 50S ribosomal subunit. The N-terminus interacts with L11 and the large rRNA to form the base of the stalk. The C-terminus forms an elongated spine to which L12 dimers bind in a sequential fashion forming a multimeric L10(L12)X complex.</text>
</comment>
<comment type="similarity">
    <text evidence="1">Belongs to the universal ribosomal protein uL10 family.</text>
</comment>
<dbReference type="EMBL" id="CP000384">
    <property type="protein sequence ID" value="ABG07081.1"/>
    <property type="molecule type" value="Genomic_DNA"/>
</dbReference>
<dbReference type="SMR" id="Q1BDF3"/>
<dbReference type="KEGG" id="mmc:Mmcs_0966"/>
<dbReference type="HOGENOM" id="CLU_092227_1_0_11"/>
<dbReference type="BioCyc" id="MSP164756:G1G6O-990-MONOMER"/>
<dbReference type="GO" id="GO:0015934">
    <property type="term" value="C:large ribosomal subunit"/>
    <property type="evidence" value="ECO:0007669"/>
    <property type="project" value="InterPro"/>
</dbReference>
<dbReference type="GO" id="GO:0070180">
    <property type="term" value="F:large ribosomal subunit rRNA binding"/>
    <property type="evidence" value="ECO:0007669"/>
    <property type="project" value="UniProtKB-UniRule"/>
</dbReference>
<dbReference type="GO" id="GO:0003735">
    <property type="term" value="F:structural constituent of ribosome"/>
    <property type="evidence" value="ECO:0007669"/>
    <property type="project" value="InterPro"/>
</dbReference>
<dbReference type="GO" id="GO:0006412">
    <property type="term" value="P:translation"/>
    <property type="evidence" value="ECO:0007669"/>
    <property type="project" value="UniProtKB-UniRule"/>
</dbReference>
<dbReference type="CDD" id="cd05797">
    <property type="entry name" value="Ribosomal_L10"/>
    <property type="match status" value="1"/>
</dbReference>
<dbReference type="FunFam" id="3.30.70.1730:FF:000003">
    <property type="entry name" value="50S ribosomal protein L10"/>
    <property type="match status" value="1"/>
</dbReference>
<dbReference type="Gene3D" id="3.30.70.1730">
    <property type="match status" value="1"/>
</dbReference>
<dbReference type="Gene3D" id="6.10.250.290">
    <property type="match status" value="1"/>
</dbReference>
<dbReference type="HAMAP" id="MF_00362">
    <property type="entry name" value="Ribosomal_uL10"/>
    <property type="match status" value="1"/>
</dbReference>
<dbReference type="InterPro" id="IPR001790">
    <property type="entry name" value="Ribosomal_uL10"/>
</dbReference>
<dbReference type="InterPro" id="IPR043141">
    <property type="entry name" value="Ribosomal_uL10-like_sf"/>
</dbReference>
<dbReference type="InterPro" id="IPR022973">
    <property type="entry name" value="Ribosomal_uL10_bac"/>
</dbReference>
<dbReference type="InterPro" id="IPR047865">
    <property type="entry name" value="Ribosomal_uL10_bac_type"/>
</dbReference>
<dbReference type="InterPro" id="IPR002363">
    <property type="entry name" value="Ribosomal_uL10_CS_bac"/>
</dbReference>
<dbReference type="NCBIfam" id="NF000955">
    <property type="entry name" value="PRK00099.1-1"/>
    <property type="match status" value="1"/>
</dbReference>
<dbReference type="PANTHER" id="PTHR11560">
    <property type="entry name" value="39S RIBOSOMAL PROTEIN L10, MITOCHONDRIAL"/>
    <property type="match status" value="1"/>
</dbReference>
<dbReference type="Pfam" id="PF00466">
    <property type="entry name" value="Ribosomal_L10"/>
    <property type="match status" value="1"/>
</dbReference>
<dbReference type="SUPFAM" id="SSF160369">
    <property type="entry name" value="Ribosomal protein L10-like"/>
    <property type="match status" value="1"/>
</dbReference>
<dbReference type="PROSITE" id="PS01109">
    <property type="entry name" value="RIBOSOMAL_L10"/>
    <property type="match status" value="1"/>
</dbReference>
<gene>
    <name evidence="1" type="primary">rplJ</name>
    <name type="ordered locus">Mmcs_0966</name>
</gene>
<evidence type="ECO:0000255" key="1">
    <source>
        <dbReference type="HAMAP-Rule" id="MF_00362"/>
    </source>
</evidence>
<evidence type="ECO:0000305" key="2"/>